<reference key="1">
    <citation type="journal article" date="1991" name="Virology">
        <title>Infectivity and complete nucleotide sequence of the cloned genomic components of a bipartite squash leaf curl geminivirus with a broad host range phenotype.</title>
        <authorList>
            <person name="Lazarowitz S.G."/>
            <person name="Lazdins I.B."/>
        </authorList>
    </citation>
    <scope>NUCLEOTIDE SEQUENCE [GENOMIC DNA]</scope>
</reference>
<gene>
    <name type="ORF">AC4</name>
    <name type="ORF">AL4</name>
</gene>
<organismHost>
    <name type="scientific">Cucurbita moschata</name>
    <name type="common">Winter crookneck squash</name>
    <name type="synonym">Cucurbita pepo var. moschata</name>
    <dbReference type="NCBI Taxonomy" id="3662"/>
</organismHost>
<organismHost>
    <name type="scientific">Cucurbita pepo</name>
    <name type="common">Vegetable marrow</name>
    <name type="synonym">Summer squash</name>
    <dbReference type="NCBI Taxonomy" id="3663"/>
</organismHost>
<organismHost>
    <name type="scientific">Phaseolus vulgaris</name>
    <name type="common">Kidney bean</name>
    <name type="synonym">French bean</name>
    <dbReference type="NCBI Taxonomy" id="3885"/>
</organismHost>
<keyword id="KW-0945">Host-virus interaction</keyword>
<keyword id="KW-1090">Inhibition of host innate immune response by virus</keyword>
<keyword id="KW-1185">Reference proteome</keyword>
<keyword id="KW-0941">Suppressor of RNA silencing</keyword>
<keyword id="KW-0899">Viral immunoevasion</keyword>
<accession>P0C6G5</accession>
<evidence type="ECO:0000250" key="1"/>
<evidence type="ECO:0000305" key="2"/>
<protein>
    <recommendedName>
        <fullName>Protein AC4</fullName>
    </recommendedName>
    <alternativeName>
        <fullName>Protein AL4</fullName>
    </alternativeName>
</protein>
<sequence>MFPKKKFLRCFCISRGRSSNRITLESPERNIPTGLRTYTASFNYLENPTSRMLDFSTSLTPDGLPDFTQTFRLPKTPTPSRTTSPKKVIIVNPGNIKCLGVQSQTKTTYITMPLMQVVREKLSTL</sequence>
<feature type="chain" id="PRO_0000323694" description="Protein AC4">
    <location>
        <begin position="1"/>
        <end position="125"/>
    </location>
</feature>
<proteinExistence type="inferred from homology"/>
<comment type="function">
    <text evidence="1">Pathogenicity determinant (By similarity). May act as a suppressor of RNA-mediated gene silencing, also known as post-transcriptional gene silencing (PTGS), a mechanism of plant viral defense that limits the accumulation of viral RNAs.</text>
</comment>
<comment type="similarity">
    <text evidence="2">Belongs to the geminiviridae protein AC4/C4 family.</text>
</comment>
<name>AC4_SLCV</name>
<dbReference type="EMBL" id="M38183">
    <property type="status" value="NOT_ANNOTATED_CDS"/>
    <property type="molecule type" value="Genomic_DNA"/>
</dbReference>
<dbReference type="Proteomes" id="UP000009151">
    <property type="component" value="Genome"/>
</dbReference>
<dbReference type="GO" id="GO:0052170">
    <property type="term" value="P:symbiont-mediated suppression of host innate immune response"/>
    <property type="evidence" value="ECO:0007669"/>
    <property type="project" value="UniProtKB-KW"/>
</dbReference>
<organism>
    <name type="scientific">Squash leaf curl virus</name>
    <name type="common">SLCV</name>
    <dbReference type="NCBI Taxonomy" id="10829"/>
    <lineage>
        <taxon>Viruses</taxon>
        <taxon>Monodnaviria</taxon>
        <taxon>Shotokuvirae</taxon>
        <taxon>Cressdnaviricota</taxon>
        <taxon>Repensiviricetes</taxon>
        <taxon>Geplafuvirales</taxon>
        <taxon>Geminiviridae</taxon>
        <taxon>Begomovirus</taxon>
    </lineage>
</organism>